<dbReference type="EC" id="2.7.1.170" evidence="1"/>
<dbReference type="EMBL" id="CP000021">
    <property type="protein sequence ID" value="AAW87562.1"/>
    <property type="molecule type" value="Genomic_DNA"/>
</dbReference>
<dbReference type="RefSeq" id="WP_011263351.1">
    <property type="nucleotide sequence ID" value="NC_006841.2"/>
</dbReference>
<dbReference type="RefSeq" id="YP_206450.1">
    <property type="nucleotide sequence ID" value="NC_006841.2"/>
</dbReference>
<dbReference type="SMR" id="Q5E084"/>
<dbReference type="STRING" id="312309.VF_A0492"/>
<dbReference type="EnsemblBacteria" id="AAW87562">
    <property type="protein sequence ID" value="AAW87562"/>
    <property type="gene ID" value="VF_A0492"/>
</dbReference>
<dbReference type="GeneID" id="54165816"/>
<dbReference type="KEGG" id="vfi:VF_A0492"/>
<dbReference type="PATRIC" id="fig|312309.11.peg.3095"/>
<dbReference type="eggNOG" id="COG2377">
    <property type="taxonomic scope" value="Bacteria"/>
</dbReference>
<dbReference type="HOGENOM" id="CLU_038782_0_0_6"/>
<dbReference type="OrthoDB" id="9763949at2"/>
<dbReference type="UniPathway" id="UPA00343"/>
<dbReference type="UniPathway" id="UPA00544"/>
<dbReference type="Proteomes" id="UP000000537">
    <property type="component" value="Chromosome II"/>
</dbReference>
<dbReference type="GO" id="GO:0005524">
    <property type="term" value="F:ATP binding"/>
    <property type="evidence" value="ECO:0007669"/>
    <property type="project" value="UniProtKB-UniRule"/>
</dbReference>
<dbReference type="GO" id="GO:0016301">
    <property type="term" value="F:kinase activity"/>
    <property type="evidence" value="ECO:0007669"/>
    <property type="project" value="UniProtKB-KW"/>
</dbReference>
<dbReference type="GO" id="GO:0016773">
    <property type="term" value="F:phosphotransferase activity, alcohol group as acceptor"/>
    <property type="evidence" value="ECO:0007669"/>
    <property type="project" value="UniProtKB-UniRule"/>
</dbReference>
<dbReference type="GO" id="GO:0097175">
    <property type="term" value="P:1,6-anhydro-N-acetyl-beta-muramic acid catabolic process"/>
    <property type="evidence" value="ECO:0007669"/>
    <property type="project" value="UniProtKB-UniRule"/>
</dbReference>
<dbReference type="GO" id="GO:0006040">
    <property type="term" value="P:amino sugar metabolic process"/>
    <property type="evidence" value="ECO:0007669"/>
    <property type="project" value="InterPro"/>
</dbReference>
<dbReference type="GO" id="GO:0009254">
    <property type="term" value="P:peptidoglycan turnover"/>
    <property type="evidence" value="ECO:0007669"/>
    <property type="project" value="UniProtKB-UniRule"/>
</dbReference>
<dbReference type="CDD" id="cd24050">
    <property type="entry name" value="ASKHA_NBD_ANMK"/>
    <property type="match status" value="1"/>
</dbReference>
<dbReference type="Gene3D" id="3.30.420.40">
    <property type="match status" value="2"/>
</dbReference>
<dbReference type="HAMAP" id="MF_01270">
    <property type="entry name" value="AnhMurNAc_kinase"/>
    <property type="match status" value="1"/>
</dbReference>
<dbReference type="InterPro" id="IPR005338">
    <property type="entry name" value="Anhydro_N_Ac-Mur_kinase"/>
</dbReference>
<dbReference type="InterPro" id="IPR043129">
    <property type="entry name" value="ATPase_NBD"/>
</dbReference>
<dbReference type="NCBIfam" id="NF007139">
    <property type="entry name" value="PRK09585.1-3"/>
    <property type="match status" value="1"/>
</dbReference>
<dbReference type="NCBIfam" id="NF007148">
    <property type="entry name" value="PRK09585.3-2"/>
    <property type="match status" value="1"/>
</dbReference>
<dbReference type="PANTHER" id="PTHR30605">
    <property type="entry name" value="ANHYDRO-N-ACETYLMURAMIC ACID KINASE"/>
    <property type="match status" value="1"/>
</dbReference>
<dbReference type="PANTHER" id="PTHR30605:SF0">
    <property type="entry name" value="ANHYDRO-N-ACETYLMURAMIC ACID KINASE"/>
    <property type="match status" value="1"/>
</dbReference>
<dbReference type="Pfam" id="PF03702">
    <property type="entry name" value="AnmK"/>
    <property type="match status" value="1"/>
</dbReference>
<dbReference type="SUPFAM" id="SSF53067">
    <property type="entry name" value="Actin-like ATPase domain"/>
    <property type="match status" value="1"/>
</dbReference>
<name>ANMK_ALIF1</name>
<evidence type="ECO:0000255" key="1">
    <source>
        <dbReference type="HAMAP-Rule" id="MF_01270"/>
    </source>
</evidence>
<reference key="1">
    <citation type="journal article" date="2005" name="Proc. Natl. Acad. Sci. U.S.A.">
        <title>Complete genome sequence of Vibrio fischeri: a symbiotic bacterium with pathogenic congeners.</title>
        <authorList>
            <person name="Ruby E.G."/>
            <person name="Urbanowski M."/>
            <person name="Campbell J."/>
            <person name="Dunn A."/>
            <person name="Faini M."/>
            <person name="Gunsalus R."/>
            <person name="Lostroh P."/>
            <person name="Lupp C."/>
            <person name="McCann J."/>
            <person name="Millikan D."/>
            <person name="Schaefer A."/>
            <person name="Stabb E."/>
            <person name="Stevens A."/>
            <person name="Visick K."/>
            <person name="Whistler C."/>
            <person name="Greenberg E.P."/>
        </authorList>
    </citation>
    <scope>NUCLEOTIDE SEQUENCE [LARGE SCALE GENOMIC DNA]</scope>
    <source>
        <strain>ATCC 700601 / ES114</strain>
    </source>
</reference>
<gene>
    <name evidence="1" type="primary">anmK</name>
    <name type="ordered locus">VF_A0492</name>
</gene>
<accession>Q5E084</accession>
<organism>
    <name type="scientific">Aliivibrio fischeri (strain ATCC 700601 / ES114)</name>
    <name type="common">Vibrio fischeri</name>
    <dbReference type="NCBI Taxonomy" id="312309"/>
    <lineage>
        <taxon>Bacteria</taxon>
        <taxon>Pseudomonadati</taxon>
        <taxon>Pseudomonadota</taxon>
        <taxon>Gammaproteobacteria</taxon>
        <taxon>Vibrionales</taxon>
        <taxon>Vibrionaceae</taxon>
        <taxon>Aliivibrio</taxon>
    </lineage>
</organism>
<keyword id="KW-0067">ATP-binding</keyword>
<keyword id="KW-0119">Carbohydrate metabolism</keyword>
<keyword id="KW-0418">Kinase</keyword>
<keyword id="KW-0547">Nucleotide-binding</keyword>
<keyword id="KW-1185">Reference proteome</keyword>
<keyword id="KW-0808">Transferase</keyword>
<comment type="function">
    <text evidence="1">Catalyzes the specific phosphorylation of 1,6-anhydro-N-acetylmuramic acid (anhMurNAc) with the simultaneous cleavage of the 1,6-anhydro ring, generating MurNAc-6-P. Is required for the utilization of anhMurNAc either imported from the medium or derived from its own cell wall murein, and thus plays a role in cell wall recycling.</text>
</comment>
<comment type="catalytic activity">
    <reaction evidence="1">
        <text>1,6-anhydro-N-acetyl-beta-muramate + ATP + H2O = N-acetyl-D-muramate 6-phosphate + ADP + H(+)</text>
        <dbReference type="Rhea" id="RHEA:24952"/>
        <dbReference type="ChEBI" id="CHEBI:15377"/>
        <dbReference type="ChEBI" id="CHEBI:15378"/>
        <dbReference type="ChEBI" id="CHEBI:30616"/>
        <dbReference type="ChEBI" id="CHEBI:58690"/>
        <dbReference type="ChEBI" id="CHEBI:58722"/>
        <dbReference type="ChEBI" id="CHEBI:456216"/>
        <dbReference type="EC" id="2.7.1.170"/>
    </reaction>
</comment>
<comment type="pathway">
    <text evidence="1">Amino-sugar metabolism; 1,6-anhydro-N-acetylmuramate degradation.</text>
</comment>
<comment type="pathway">
    <text evidence="1">Cell wall biogenesis; peptidoglycan recycling.</text>
</comment>
<comment type="similarity">
    <text evidence="1">Belongs to the anhydro-N-acetylmuramic acid kinase family.</text>
</comment>
<proteinExistence type="inferred from homology"/>
<feature type="chain" id="PRO_0000250079" description="Anhydro-N-acetylmuramic acid kinase">
    <location>
        <begin position="1"/>
        <end position="367"/>
    </location>
</feature>
<feature type="binding site" evidence="1">
    <location>
        <begin position="10"/>
        <end position="17"/>
    </location>
    <ligand>
        <name>ATP</name>
        <dbReference type="ChEBI" id="CHEBI:30616"/>
    </ligand>
</feature>
<protein>
    <recommendedName>
        <fullName evidence="1">Anhydro-N-acetylmuramic acid kinase</fullName>
        <ecNumber evidence="1">2.7.1.170</ecNumber>
    </recommendedName>
    <alternativeName>
        <fullName evidence="1">AnhMurNAc kinase</fullName>
    </alternativeName>
</protein>
<sequence>MEKYIGLMSGTSLDGVDAVIVETNGTTINLLGHADYPMDPQLKADLLAVCTGQQTNLKVIGEIDHRLGHLFAEATLHLLSTLNIASSDITAIGSHGQTVFHSPDAEYPFTMQLGDSNIIAAKTGIDTVADFRRKDMALGGQGAPLVPAFHNTLFGKPESTNVILNIGGISNISILQKDSPVIGYDTGPGNMLMDSWITEHKGESYDKDGAWARSGQIIDELLNQLKTHDYFARPYPKSTGRELFNLDWFAQYIENKPYQPQDVQATLLEFTVTTIVDQVIRFQVGNDTKLLVCGGGAHNQFLMERLQYHLPNWAVSTTNDYNVDSDNMEAMAFAWLAHQRIHGLPSNEPDVTGASRYASLGVIYPAN</sequence>